<proteinExistence type="inferred from homology"/>
<accession>Q5HXD2</accession>
<feature type="chain" id="PRO_0000175555" description="Flavin-dependent thymidylate synthase">
    <location>
        <begin position="1"/>
        <end position="207"/>
    </location>
</feature>
<feature type="domain" description="ThyX" evidence="2">
    <location>
        <begin position="1"/>
        <end position="204"/>
    </location>
</feature>
<feature type="short sequence motif" description="ThyX motif" evidence="1">
    <location>
        <begin position="74"/>
        <end position="84"/>
    </location>
</feature>
<feature type="active site" description="Involved in ionization of N3 of dUMP, leading to its activation" evidence="1">
    <location>
        <position position="170"/>
    </location>
</feature>
<feature type="binding site" evidence="1">
    <location>
        <position position="50"/>
    </location>
    <ligand>
        <name>FAD</name>
        <dbReference type="ChEBI" id="CHEBI:57692"/>
        <note>ligand shared between neighboring subunits</note>
    </ligand>
</feature>
<feature type="binding site" evidence="1">
    <location>
        <begin position="71"/>
        <end position="74"/>
    </location>
    <ligand>
        <name>dUMP</name>
        <dbReference type="ChEBI" id="CHEBI:246422"/>
        <note>ligand shared between dimeric partners</note>
    </ligand>
</feature>
<feature type="binding site" evidence="1">
    <location>
        <begin position="74"/>
        <end position="76"/>
    </location>
    <ligand>
        <name>FAD</name>
        <dbReference type="ChEBI" id="CHEBI:57692"/>
        <note>ligand shared between neighboring subunits</note>
    </ligand>
</feature>
<feature type="binding site" description="in other chain" evidence="1">
    <location>
        <begin position="84"/>
        <end position="86"/>
    </location>
    <ligand>
        <name>dUMP</name>
        <dbReference type="ChEBI" id="CHEBI:246422"/>
        <note>ligand shared between dimeric partners</note>
    </ligand>
</feature>
<feature type="binding site" description="in other chain" evidence="1">
    <location>
        <position position="143"/>
    </location>
    <ligand>
        <name>dUMP</name>
        <dbReference type="ChEBI" id="CHEBI:246422"/>
        <note>ligand shared between dimeric partners</note>
    </ligand>
</feature>
<feature type="binding site" evidence="1">
    <location>
        <begin position="159"/>
        <end position="161"/>
    </location>
    <ligand>
        <name>FAD</name>
        <dbReference type="ChEBI" id="CHEBI:57692"/>
        <note>ligand shared between neighboring subunits</note>
    </ligand>
</feature>
<feature type="binding site" evidence="1">
    <location>
        <position position="165"/>
    </location>
    <ligand>
        <name>FAD</name>
        <dbReference type="ChEBI" id="CHEBI:57692"/>
        <note>ligand shared between neighboring subunits</note>
    </ligand>
</feature>
<feature type="binding site" evidence="1">
    <location>
        <position position="170"/>
    </location>
    <ligand>
        <name>dUMP</name>
        <dbReference type="ChEBI" id="CHEBI:246422"/>
        <note>ligand shared between dimeric partners</note>
    </ligand>
</feature>
<comment type="function">
    <text evidence="1">Catalyzes the reductive methylation of 2'-deoxyuridine-5'-monophosphate (dUMP) to 2'-deoxythymidine-5'-monophosphate (dTMP) while utilizing 5,10-methylenetetrahydrofolate (mTHF) as the methyl donor, and NADPH and FADH(2) as the reductant.</text>
</comment>
<comment type="catalytic activity">
    <reaction evidence="1">
        <text>dUMP + (6R)-5,10-methylene-5,6,7,8-tetrahydrofolate + NADPH + H(+) = dTMP + (6S)-5,6,7,8-tetrahydrofolate + NADP(+)</text>
        <dbReference type="Rhea" id="RHEA:29043"/>
        <dbReference type="ChEBI" id="CHEBI:15378"/>
        <dbReference type="ChEBI" id="CHEBI:15636"/>
        <dbReference type="ChEBI" id="CHEBI:57453"/>
        <dbReference type="ChEBI" id="CHEBI:57783"/>
        <dbReference type="ChEBI" id="CHEBI:58349"/>
        <dbReference type="ChEBI" id="CHEBI:63528"/>
        <dbReference type="ChEBI" id="CHEBI:246422"/>
        <dbReference type="EC" id="2.1.1.148"/>
    </reaction>
</comment>
<comment type="cofactor">
    <cofactor evidence="1">
        <name>FAD</name>
        <dbReference type="ChEBI" id="CHEBI:57692"/>
    </cofactor>
    <text evidence="1">Binds 4 FAD per tetramer. Each FAD binding site is formed by three monomers.</text>
</comment>
<comment type="pathway">
    <text evidence="1">Pyrimidine metabolism; dTTP biosynthesis.</text>
</comment>
<comment type="subunit">
    <text evidence="1">Homotetramer.</text>
</comment>
<comment type="similarity">
    <text evidence="1">Belongs to the thymidylate synthase ThyX family.</text>
</comment>
<gene>
    <name evidence="1" type="primary">thyX</name>
    <name type="ordered locus">CJE0026</name>
</gene>
<organism>
    <name type="scientific">Campylobacter jejuni (strain RM1221)</name>
    <dbReference type="NCBI Taxonomy" id="195099"/>
    <lineage>
        <taxon>Bacteria</taxon>
        <taxon>Pseudomonadati</taxon>
        <taxon>Campylobacterota</taxon>
        <taxon>Epsilonproteobacteria</taxon>
        <taxon>Campylobacterales</taxon>
        <taxon>Campylobacteraceae</taxon>
        <taxon>Campylobacter</taxon>
    </lineage>
</organism>
<dbReference type="EC" id="2.1.1.148" evidence="1"/>
<dbReference type="EMBL" id="CP000025">
    <property type="protein sequence ID" value="AAW34521.1"/>
    <property type="molecule type" value="Genomic_DNA"/>
</dbReference>
<dbReference type="RefSeq" id="WP_002853111.1">
    <property type="nucleotide sequence ID" value="NC_003912.7"/>
</dbReference>
<dbReference type="SMR" id="Q5HXD2"/>
<dbReference type="KEGG" id="cjr:CJE0026"/>
<dbReference type="HOGENOM" id="CLU_077585_2_0_7"/>
<dbReference type="UniPathway" id="UPA00575"/>
<dbReference type="GO" id="GO:0050660">
    <property type="term" value="F:flavin adenine dinucleotide binding"/>
    <property type="evidence" value="ECO:0007669"/>
    <property type="project" value="InterPro"/>
</dbReference>
<dbReference type="GO" id="GO:0070402">
    <property type="term" value="F:NADPH binding"/>
    <property type="evidence" value="ECO:0007669"/>
    <property type="project" value="TreeGrafter"/>
</dbReference>
<dbReference type="GO" id="GO:0050797">
    <property type="term" value="F:thymidylate synthase (FAD) activity"/>
    <property type="evidence" value="ECO:0007669"/>
    <property type="project" value="UniProtKB-UniRule"/>
</dbReference>
<dbReference type="GO" id="GO:0004799">
    <property type="term" value="F:thymidylate synthase activity"/>
    <property type="evidence" value="ECO:0007669"/>
    <property type="project" value="TreeGrafter"/>
</dbReference>
<dbReference type="GO" id="GO:0006231">
    <property type="term" value="P:dTMP biosynthetic process"/>
    <property type="evidence" value="ECO:0007669"/>
    <property type="project" value="UniProtKB-UniRule"/>
</dbReference>
<dbReference type="GO" id="GO:0006235">
    <property type="term" value="P:dTTP biosynthetic process"/>
    <property type="evidence" value="ECO:0007669"/>
    <property type="project" value="UniProtKB-UniRule"/>
</dbReference>
<dbReference type="GO" id="GO:0032259">
    <property type="term" value="P:methylation"/>
    <property type="evidence" value="ECO:0007669"/>
    <property type="project" value="UniProtKB-KW"/>
</dbReference>
<dbReference type="CDD" id="cd20175">
    <property type="entry name" value="ThyX"/>
    <property type="match status" value="1"/>
</dbReference>
<dbReference type="Gene3D" id="3.30.1360.170">
    <property type="match status" value="1"/>
</dbReference>
<dbReference type="HAMAP" id="MF_01408">
    <property type="entry name" value="ThyX"/>
    <property type="match status" value="1"/>
</dbReference>
<dbReference type="InterPro" id="IPR003669">
    <property type="entry name" value="Thymidylate_synthase_ThyX"/>
</dbReference>
<dbReference type="InterPro" id="IPR036098">
    <property type="entry name" value="Thymidylate_synthase_ThyX_sf"/>
</dbReference>
<dbReference type="NCBIfam" id="TIGR02170">
    <property type="entry name" value="thyX"/>
    <property type="match status" value="1"/>
</dbReference>
<dbReference type="PANTHER" id="PTHR34934">
    <property type="entry name" value="FLAVIN-DEPENDENT THYMIDYLATE SYNTHASE"/>
    <property type="match status" value="1"/>
</dbReference>
<dbReference type="PANTHER" id="PTHR34934:SF1">
    <property type="entry name" value="FLAVIN-DEPENDENT THYMIDYLATE SYNTHASE"/>
    <property type="match status" value="1"/>
</dbReference>
<dbReference type="Pfam" id="PF02511">
    <property type="entry name" value="Thy1"/>
    <property type="match status" value="1"/>
</dbReference>
<dbReference type="SUPFAM" id="SSF69796">
    <property type="entry name" value="Thymidylate synthase-complementing protein Thy1"/>
    <property type="match status" value="1"/>
</dbReference>
<dbReference type="PROSITE" id="PS51331">
    <property type="entry name" value="THYX"/>
    <property type="match status" value="1"/>
</dbReference>
<reference key="1">
    <citation type="journal article" date="2005" name="PLoS Biol.">
        <title>Major structural differences and novel potential virulence mechanisms from the genomes of multiple Campylobacter species.</title>
        <authorList>
            <person name="Fouts D.E."/>
            <person name="Mongodin E.F."/>
            <person name="Mandrell R.E."/>
            <person name="Miller W.G."/>
            <person name="Rasko D.A."/>
            <person name="Ravel J."/>
            <person name="Brinkac L.M."/>
            <person name="DeBoy R.T."/>
            <person name="Parker C.T."/>
            <person name="Daugherty S.C."/>
            <person name="Dodson R.J."/>
            <person name="Durkin A.S."/>
            <person name="Madupu R."/>
            <person name="Sullivan S.A."/>
            <person name="Shetty J.U."/>
            <person name="Ayodeji M.A."/>
            <person name="Shvartsbeyn A."/>
            <person name="Schatz M.C."/>
            <person name="Badger J.H."/>
            <person name="Fraser C.M."/>
            <person name="Nelson K.E."/>
        </authorList>
    </citation>
    <scope>NUCLEOTIDE SEQUENCE [LARGE SCALE GENOMIC DNA]</scope>
    <source>
        <strain>RM1221</strain>
    </source>
</reference>
<evidence type="ECO:0000255" key="1">
    <source>
        <dbReference type="HAMAP-Rule" id="MF_01408"/>
    </source>
</evidence>
<evidence type="ECO:0000255" key="2">
    <source>
        <dbReference type="PROSITE-ProRule" id="PRU00661"/>
    </source>
</evidence>
<keyword id="KW-0274">FAD</keyword>
<keyword id="KW-0285">Flavoprotein</keyword>
<keyword id="KW-0489">Methyltransferase</keyword>
<keyword id="KW-0521">NADP</keyword>
<keyword id="KW-0545">Nucleotide biosynthesis</keyword>
<keyword id="KW-0808">Transferase</keyword>
<protein>
    <recommendedName>
        <fullName evidence="1">Flavin-dependent thymidylate synthase</fullName>
        <shortName evidence="1">FDTS</shortName>
        <ecNumber evidence="1">2.1.1.148</ecNumber>
    </recommendedName>
    <alternativeName>
        <fullName evidence="1">FAD-dependent thymidylate synthase</fullName>
    </alternativeName>
    <alternativeName>
        <fullName evidence="1">Thymidylate synthase ThyX</fullName>
        <shortName evidence="1">TS</shortName>
        <shortName evidence="1">TSase</shortName>
    </alternativeName>
</protein>
<name>THYX_CAMJR</name>
<sequence>MQITLLFHTPLSVCSHATRTCWQSFEKGDCGGEKDKELIDRVGNKFKHASTLEHLNYTFYIQGISRACLQEVARHRHTSPSVKSTRYTLKELRNEAEFKIGDFENASRYLVLCGNEEVDNASIKALENLRTILQKSISLDIAKYCLPESYKTELTLTINARSLQNFISLRSSKSALWEIRNLANALFEALPQEHKFIFEHCLHKDIE</sequence>